<accession>Q2FU94</accession>
<dbReference type="EMBL" id="CP000254">
    <property type="protein sequence ID" value="ABD41955.1"/>
    <property type="molecule type" value="Genomic_DNA"/>
</dbReference>
<dbReference type="RefSeq" id="WP_011449213.1">
    <property type="nucleotide sequence ID" value="NC_007796.1"/>
</dbReference>
<dbReference type="SMR" id="Q2FU94"/>
<dbReference type="FunCoup" id="Q2FU94">
    <property type="interactions" value="149"/>
</dbReference>
<dbReference type="STRING" id="323259.Mhun_2250"/>
<dbReference type="EnsemblBacteria" id="ABD41955">
    <property type="protein sequence ID" value="ABD41955"/>
    <property type="gene ID" value="Mhun_2250"/>
</dbReference>
<dbReference type="GeneID" id="3923952"/>
<dbReference type="KEGG" id="mhu:Mhun_2250"/>
<dbReference type="eggNOG" id="arCOG04067">
    <property type="taxonomic scope" value="Archaea"/>
</dbReference>
<dbReference type="HOGENOM" id="CLU_036235_0_3_2"/>
<dbReference type="InParanoid" id="Q2FU94"/>
<dbReference type="OrthoDB" id="5987at2157"/>
<dbReference type="Proteomes" id="UP000001941">
    <property type="component" value="Chromosome"/>
</dbReference>
<dbReference type="GO" id="GO:0022625">
    <property type="term" value="C:cytosolic large ribosomal subunit"/>
    <property type="evidence" value="ECO:0007669"/>
    <property type="project" value="TreeGrafter"/>
</dbReference>
<dbReference type="GO" id="GO:0019843">
    <property type="term" value="F:rRNA binding"/>
    <property type="evidence" value="ECO:0007669"/>
    <property type="project" value="UniProtKB-UniRule"/>
</dbReference>
<dbReference type="GO" id="GO:0003735">
    <property type="term" value="F:structural constituent of ribosome"/>
    <property type="evidence" value="ECO:0007669"/>
    <property type="project" value="InterPro"/>
</dbReference>
<dbReference type="GO" id="GO:0002181">
    <property type="term" value="P:cytoplasmic translation"/>
    <property type="evidence" value="ECO:0007669"/>
    <property type="project" value="TreeGrafter"/>
</dbReference>
<dbReference type="FunFam" id="2.30.30.30:FF:000001">
    <property type="entry name" value="50S ribosomal protein L2"/>
    <property type="match status" value="1"/>
</dbReference>
<dbReference type="FunFam" id="4.10.950.10:FF:000002">
    <property type="entry name" value="60S ribosomal protein L2"/>
    <property type="match status" value="1"/>
</dbReference>
<dbReference type="Gene3D" id="2.30.30.30">
    <property type="match status" value="1"/>
</dbReference>
<dbReference type="Gene3D" id="2.40.50.140">
    <property type="entry name" value="Nucleic acid-binding proteins"/>
    <property type="match status" value="1"/>
</dbReference>
<dbReference type="Gene3D" id="4.10.950.10">
    <property type="entry name" value="Ribosomal protein L2, domain 3"/>
    <property type="match status" value="1"/>
</dbReference>
<dbReference type="HAMAP" id="MF_01320_A">
    <property type="entry name" value="Ribosomal_uL2_A"/>
    <property type="match status" value="1"/>
</dbReference>
<dbReference type="InterPro" id="IPR012340">
    <property type="entry name" value="NA-bd_OB-fold"/>
</dbReference>
<dbReference type="InterPro" id="IPR014722">
    <property type="entry name" value="Rib_uL2_dom2"/>
</dbReference>
<dbReference type="InterPro" id="IPR002171">
    <property type="entry name" value="Ribosomal_uL2"/>
</dbReference>
<dbReference type="InterPro" id="IPR023672">
    <property type="entry name" value="Ribosomal_uL2_arc_euk"/>
</dbReference>
<dbReference type="InterPro" id="IPR022669">
    <property type="entry name" value="Ribosomal_uL2_C"/>
</dbReference>
<dbReference type="InterPro" id="IPR014726">
    <property type="entry name" value="Ribosomal_uL2_dom3"/>
</dbReference>
<dbReference type="InterPro" id="IPR022666">
    <property type="entry name" value="Ribosomal_uL2_RNA-bd_dom"/>
</dbReference>
<dbReference type="InterPro" id="IPR008991">
    <property type="entry name" value="Translation_prot_SH3-like_sf"/>
</dbReference>
<dbReference type="NCBIfam" id="NF007180">
    <property type="entry name" value="PRK09612.1"/>
    <property type="match status" value="1"/>
</dbReference>
<dbReference type="PANTHER" id="PTHR13691:SF16">
    <property type="entry name" value="LARGE RIBOSOMAL SUBUNIT PROTEIN UL2"/>
    <property type="match status" value="1"/>
</dbReference>
<dbReference type="PANTHER" id="PTHR13691">
    <property type="entry name" value="RIBOSOMAL PROTEIN L2"/>
    <property type="match status" value="1"/>
</dbReference>
<dbReference type="Pfam" id="PF00181">
    <property type="entry name" value="Ribosomal_L2"/>
    <property type="match status" value="1"/>
</dbReference>
<dbReference type="Pfam" id="PF03947">
    <property type="entry name" value="Ribosomal_L2_C"/>
    <property type="match status" value="1"/>
</dbReference>
<dbReference type="PIRSF" id="PIRSF002158">
    <property type="entry name" value="Ribosomal_L2"/>
    <property type="match status" value="1"/>
</dbReference>
<dbReference type="SMART" id="SM01383">
    <property type="entry name" value="Ribosomal_L2"/>
    <property type="match status" value="1"/>
</dbReference>
<dbReference type="SMART" id="SM01382">
    <property type="entry name" value="Ribosomal_L2_C"/>
    <property type="match status" value="1"/>
</dbReference>
<dbReference type="SUPFAM" id="SSF50249">
    <property type="entry name" value="Nucleic acid-binding proteins"/>
    <property type="match status" value="1"/>
</dbReference>
<dbReference type="SUPFAM" id="SSF50104">
    <property type="entry name" value="Translation proteins SH3-like domain"/>
    <property type="match status" value="1"/>
</dbReference>
<sequence length="236" mass="25367">MGHRITTQSRGHGGPTYRAPSHRYKAALKHLGRAGETVSYKIIDIEHDPARHTPIALVDVPDGENTYVLVTEGMGIGDVLTWGADAEIRNGNTLPLQEIPTGSSVCNIEAYPNDGGKFVRASGVQATVTDKMEGRVAVRMPSGSTKWFNGQCRATIGIVAGGGRSEKPFVKAGKKYHKMKNTASNWPRVRGFAMNVIDHPFGGGGHQHAGRPKTVSRGTSPGRKVGHIAARRTGRR</sequence>
<name>RL2_METHJ</name>
<proteinExistence type="inferred from homology"/>
<organism>
    <name type="scientific">Methanospirillum hungatei JF-1 (strain ATCC 27890 / DSM 864 / NBRC 100397 / JF-1)</name>
    <dbReference type="NCBI Taxonomy" id="323259"/>
    <lineage>
        <taxon>Archaea</taxon>
        <taxon>Methanobacteriati</taxon>
        <taxon>Methanobacteriota</taxon>
        <taxon>Stenosarchaea group</taxon>
        <taxon>Methanomicrobia</taxon>
        <taxon>Methanomicrobiales</taxon>
        <taxon>Methanospirillaceae</taxon>
        <taxon>Methanospirillum</taxon>
    </lineage>
</organism>
<gene>
    <name evidence="1" type="primary">rpl2</name>
    <name type="ordered locus">Mhun_2250</name>
</gene>
<keyword id="KW-1185">Reference proteome</keyword>
<keyword id="KW-0687">Ribonucleoprotein</keyword>
<keyword id="KW-0689">Ribosomal protein</keyword>
<keyword id="KW-0694">RNA-binding</keyword>
<keyword id="KW-0699">rRNA-binding</keyword>
<protein>
    <recommendedName>
        <fullName evidence="1">Large ribosomal subunit protein uL2</fullName>
    </recommendedName>
    <alternativeName>
        <fullName evidence="3">50S ribosomal protein L2</fullName>
    </alternativeName>
</protein>
<evidence type="ECO:0000255" key="1">
    <source>
        <dbReference type="HAMAP-Rule" id="MF_01320"/>
    </source>
</evidence>
<evidence type="ECO:0000256" key="2">
    <source>
        <dbReference type="SAM" id="MobiDB-lite"/>
    </source>
</evidence>
<evidence type="ECO:0000305" key="3"/>
<comment type="function">
    <text evidence="1">One of the primary rRNA binding proteins. Required for association of the 30S and 50S subunits to form the 70S ribosome, for tRNA binding and peptide bond formation. It has been suggested to have peptidyltransferase activity; this is somewhat controversial. Makes several contacts with the 16S rRNA in the 70S ribosome.</text>
</comment>
<comment type="subunit">
    <text evidence="1">Part of the 50S ribosomal subunit. Forms a bridge to the 30S subunit in the 70S ribosome.</text>
</comment>
<comment type="similarity">
    <text evidence="1">Belongs to the universal ribosomal protein uL2 family.</text>
</comment>
<feature type="chain" id="PRO_0000237292" description="Large ribosomal subunit protein uL2">
    <location>
        <begin position="1"/>
        <end position="236"/>
    </location>
</feature>
<feature type="region of interest" description="Disordered" evidence="2">
    <location>
        <begin position="1"/>
        <end position="20"/>
    </location>
</feature>
<feature type="region of interest" description="Disordered" evidence="2">
    <location>
        <begin position="202"/>
        <end position="236"/>
    </location>
</feature>
<feature type="compositionally biased region" description="Polar residues" evidence="2">
    <location>
        <begin position="1"/>
        <end position="10"/>
    </location>
</feature>
<feature type="compositionally biased region" description="Basic residues" evidence="2">
    <location>
        <begin position="224"/>
        <end position="236"/>
    </location>
</feature>
<reference key="1">
    <citation type="journal article" date="2016" name="Stand. Genomic Sci.">
        <title>Complete genome sequence of Methanospirillum hungatei type strain JF1.</title>
        <authorList>
            <person name="Gunsalus R.P."/>
            <person name="Cook L.E."/>
            <person name="Crable B."/>
            <person name="Rohlin L."/>
            <person name="McDonald E."/>
            <person name="Mouttaki H."/>
            <person name="Sieber J.R."/>
            <person name="Poweleit N."/>
            <person name="Zhou H."/>
            <person name="Lapidus A.L."/>
            <person name="Daligault H.E."/>
            <person name="Land M."/>
            <person name="Gilna P."/>
            <person name="Ivanova N."/>
            <person name="Kyrpides N."/>
            <person name="Culley D.E."/>
            <person name="McInerney M.J."/>
        </authorList>
    </citation>
    <scope>NUCLEOTIDE SEQUENCE [LARGE SCALE GENOMIC DNA]</scope>
    <source>
        <strain>ATCC 27890 / DSM 864 / NBRC 100397 / JF-1</strain>
    </source>
</reference>